<protein>
    <recommendedName>
        <fullName evidence="1">CTP synthase</fullName>
        <ecNumber evidence="1">6.3.4.2</ecNumber>
    </recommendedName>
    <alternativeName>
        <fullName evidence="1">Cytidine 5'-triphosphate synthase</fullName>
    </alternativeName>
    <alternativeName>
        <fullName evidence="1">Cytidine triphosphate synthetase</fullName>
        <shortName evidence="1">CTP synthetase</shortName>
        <shortName evidence="1">CTPS</shortName>
    </alternativeName>
    <alternativeName>
        <fullName evidence="1">UTP--ammonia ligase</fullName>
    </alternativeName>
</protein>
<keyword id="KW-0067">ATP-binding</keyword>
<keyword id="KW-0315">Glutamine amidotransferase</keyword>
<keyword id="KW-0436">Ligase</keyword>
<keyword id="KW-0460">Magnesium</keyword>
<keyword id="KW-0479">Metal-binding</keyword>
<keyword id="KW-0547">Nucleotide-binding</keyword>
<keyword id="KW-0665">Pyrimidine biosynthesis</keyword>
<sequence>MTKYIFVTGGVASSVGKGITVASLGRLLKSRGISVSIQKLDPYINVDPGTMSPYQHGEVFVTEDGAETDLDLGHYERFIDENLSRVNNITTGQIYSSVIQKERRGDFLGGTIQVIPHITNEIKSRVALVAKNTNADVVIVEIGGTVGDIESLPFLEAIRQMKKDVGRDNVMYIHVTLLPYLQASGELKTKPTQHSIAELRRVGISPAVVLCRSDLPVDDDMREKIALFADLPNEAVVALPTVDSIYEVPLVLEEAGLGDLIIERLALAAQPVQLDEWRSLVARIKQPKRHTTVAIVGKYVELRDAYMSVAESVRHAGWAQDIQVDIKWVSSEELEVADPVTMLGDVQGIIVPGGFGYRGVEGKIRAVRYARENKIPFLGLCLGMQCATIEFARFALNAPDANSTEFNPNTKLPVIDFMPDQLDISDKGGTMRLGVYPCILAPDTKAAKAYGRELALERHRHRFEFNNKYRKAMEAAGFVISGHSPDGRLVEIVELRDHPWFVASQFHPEFKSRPNNPHPLFRDFVQAALEQIAE</sequence>
<dbReference type="EC" id="6.3.4.2" evidence="1"/>
<dbReference type="EMBL" id="CP000875">
    <property type="protein sequence ID" value="ABX04386.1"/>
    <property type="molecule type" value="Genomic_DNA"/>
</dbReference>
<dbReference type="SMR" id="A9B6S7"/>
<dbReference type="FunCoup" id="A9B6S7">
    <property type="interactions" value="513"/>
</dbReference>
<dbReference type="STRING" id="316274.Haur_1743"/>
<dbReference type="KEGG" id="hau:Haur_1743"/>
<dbReference type="eggNOG" id="COG0504">
    <property type="taxonomic scope" value="Bacteria"/>
</dbReference>
<dbReference type="HOGENOM" id="CLU_011675_5_0_0"/>
<dbReference type="InParanoid" id="A9B6S7"/>
<dbReference type="UniPathway" id="UPA00159">
    <property type="reaction ID" value="UER00277"/>
</dbReference>
<dbReference type="Proteomes" id="UP000000787">
    <property type="component" value="Chromosome"/>
</dbReference>
<dbReference type="GO" id="GO:0005829">
    <property type="term" value="C:cytosol"/>
    <property type="evidence" value="ECO:0007669"/>
    <property type="project" value="TreeGrafter"/>
</dbReference>
<dbReference type="GO" id="GO:0005524">
    <property type="term" value="F:ATP binding"/>
    <property type="evidence" value="ECO:0007669"/>
    <property type="project" value="UniProtKB-KW"/>
</dbReference>
<dbReference type="GO" id="GO:0003883">
    <property type="term" value="F:CTP synthase activity"/>
    <property type="evidence" value="ECO:0007669"/>
    <property type="project" value="UniProtKB-UniRule"/>
</dbReference>
<dbReference type="GO" id="GO:0004359">
    <property type="term" value="F:glutaminase activity"/>
    <property type="evidence" value="ECO:0007669"/>
    <property type="project" value="RHEA"/>
</dbReference>
<dbReference type="GO" id="GO:0042802">
    <property type="term" value="F:identical protein binding"/>
    <property type="evidence" value="ECO:0007669"/>
    <property type="project" value="TreeGrafter"/>
</dbReference>
<dbReference type="GO" id="GO:0046872">
    <property type="term" value="F:metal ion binding"/>
    <property type="evidence" value="ECO:0007669"/>
    <property type="project" value="UniProtKB-KW"/>
</dbReference>
<dbReference type="GO" id="GO:0044210">
    <property type="term" value="P:'de novo' CTP biosynthetic process"/>
    <property type="evidence" value="ECO:0007669"/>
    <property type="project" value="UniProtKB-UniRule"/>
</dbReference>
<dbReference type="GO" id="GO:0019856">
    <property type="term" value="P:pyrimidine nucleobase biosynthetic process"/>
    <property type="evidence" value="ECO:0007669"/>
    <property type="project" value="TreeGrafter"/>
</dbReference>
<dbReference type="CDD" id="cd03113">
    <property type="entry name" value="CTPS_N"/>
    <property type="match status" value="1"/>
</dbReference>
<dbReference type="CDD" id="cd01746">
    <property type="entry name" value="GATase1_CTP_Synthase"/>
    <property type="match status" value="1"/>
</dbReference>
<dbReference type="FunFam" id="3.40.50.300:FF:000009">
    <property type="entry name" value="CTP synthase"/>
    <property type="match status" value="1"/>
</dbReference>
<dbReference type="FunFam" id="3.40.50.880:FF:000002">
    <property type="entry name" value="CTP synthase"/>
    <property type="match status" value="1"/>
</dbReference>
<dbReference type="Gene3D" id="3.40.50.880">
    <property type="match status" value="1"/>
</dbReference>
<dbReference type="Gene3D" id="3.40.50.300">
    <property type="entry name" value="P-loop containing nucleotide triphosphate hydrolases"/>
    <property type="match status" value="1"/>
</dbReference>
<dbReference type="HAMAP" id="MF_01227">
    <property type="entry name" value="PyrG"/>
    <property type="match status" value="1"/>
</dbReference>
<dbReference type="InterPro" id="IPR029062">
    <property type="entry name" value="Class_I_gatase-like"/>
</dbReference>
<dbReference type="InterPro" id="IPR004468">
    <property type="entry name" value="CTP_synthase"/>
</dbReference>
<dbReference type="InterPro" id="IPR017456">
    <property type="entry name" value="CTP_synthase_N"/>
</dbReference>
<dbReference type="InterPro" id="IPR017926">
    <property type="entry name" value="GATASE"/>
</dbReference>
<dbReference type="InterPro" id="IPR033828">
    <property type="entry name" value="GATase1_CTP_Synthase"/>
</dbReference>
<dbReference type="InterPro" id="IPR027417">
    <property type="entry name" value="P-loop_NTPase"/>
</dbReference>
<dbReference type="NCBIfam" id="NF003792">
    <property type="entry name" value="PRK05380.1"/>
    <property type="match status" value="1"/>
</dbReference>
<dbReference type="NCBIfam" id="TIGR00337">
    <property type="entry name" value="PyrG"/>
    <property type="match status" value="1"/>
</dbReference>
<dbReference type="PANTHER" id="PTHR11550">
    <property type="entry name" value="CTP SYNTHASE"/>
    <property type="match status" value="1"/>
</dbReference>
<dbReference type="PANTHER" id="PTHR11550:SF0">
    <property type="entry name" value="CTP SYNTHASE-RELATED"/>
    <property type="match status" value="1"/>
</dbReference>
<dbReference type="Pfam" id="PF06418">
    <property type="entry name" value="CTP_synth_N"/>
    <property type="match status" value="1"/>
</dbReference>
<dbReference type="Pfam" id="PF00117">
    <property type="entry name" value="GATase"/>
    <property type="match status" value="1"/>
</dbReference>
<dbReference type="SUPFAM" id="SSF52317">
    <property type="entry name" value="Class I glutamine amidotransferase-like"/>
    <property type="match status" value="1"/>
</dbReference>
<dbReference type="SUPFAM" id="SSF52540">
    <property type="entry name" value="P-loop containing nucleoside triphosphate hydrolases"/>
    <property type="match status" value="1"/>
</dbReference>
<dbReference type="PROSITE" id="PS51273">
    <property type="entry name" value="GATASE_TYPE_1"/>
    <property type="match status" value="1"/>
</dbReference>
<comment type="function">
    <text evidence="1">Catalyzes the ATP-dependent amination of UTP to CTP with either L-glutamine or ammonia as the source of nitrogen. Regulates intracellular CTP levels through interactions with the four ribonucleotide triphosphates.</text>
</comment>
<comment type="catalytic activity">
    <reaction evidence="1">
        <text>UTP + L-glutamine + ATP + H2O = CTP + L-glutamate + ADP + phosphate + 2 H(+)</text>
        <dbReference type="Rhea" id="RHEA:26426"/>
        <dbReference type="ChEBI" id="CHEBI:15377"/>
        <dbReference type="ChEBI" id="CHEBI:15378"/>
        <dbReference type="ChEBI" id="CHEBI:29985"/>
        <dbReference type="ChEBI" id="CHEBI:30616"/>
        <dbReference type="ChEBI" id="CHEBI:37563"/>
        <dbReference type="ChEBI" id="CHEBI:43474"/>
        <dbReference type="ChEBI" id="CHEBI:46398"/>
        <dbReference type="ChEBI" id="CHEBI:58359"/>
        <dbReference type="ChEBI" id="CHEBI:456216"/>
        <dbReference type="EC" id="6.3.4.2"/>
    </reaction>
</comment>
<comment type="catalytic activity">
    <reaction evidence="1">
        <text>L-glutamine + H2O = L-glutamate + NH4(+)</text>
        <dbReference type="Rhea" id="RHEA:15889"/>
        <dbReference type="ChEBI" id="CHEBI:15377"/>
        <dbReference type="ChEBI" id="CHEBI:28938"/>
        <dbReference type="ChEBI" id="CHEBI:29985"/>
        <dbReference type="ChEBI" id="CHEBI:58359"/>
    </reaction>
</comment>
<comment type="catalytic activity">
    <reaction evidence="1">
        <text>UTP + NH4(+) + ATP = CTP + ADP + phosphate + 2 H(+)</text>
        <dbReference type="Rhea" id="RHEA:16597"/>
        <dbReference type="ChEBI" id="CHEBI:15378"/>
        <dbReference type="ChEBI" id="CHEBI:28938"/>
        <dbReference type="ChEBI" id="CHEBI:30616"/>
        <dbReference type="ChEBI" id="CHEBI:37563"/>
        <dbReference type="ChEBI" id="CHEBI:43474"/>
        <dbReference type="ChEBI" id="CHEBI:46398"/>
        <dbReference type="ChEBI" id="CHEBI:456216"/>
    </reaction>
</comment>
<comment type="activity regulation">
    <text evidence="1">Allosterically activated by GTP, when glutamine is the substrate; GTP has no effect on the reaction when ammonia is the substrate. The allosteric effector GTP functions by stabilizing the protein conformation that binds the tetrahedral intermediate(s) formed during glutamine hydrolysis. Inhibited by the product CTP, via allosteric rather than competitive inhibition.</text>
</comment>
<comment type="pathway">
    <text evidence="1">Pyrimidine metabolism; CTP biosynthesis via de novo pathway; CTP from UDP: step 2/2.</text>
</comment>
<comment type="subunit">
    <text evidence="1">Homotetramer.</text>
</comment>
<comment type="miscellaneous">
    <text evidence="1">CTPSs have evolved a hybrid strategy for distinguishing between UTP and CTP. The overlapping regions of the product feedback inhibitory and substrate sites recognize a common feature in both compounds, the triphosphate moiety. To differentiate isosteric substrate and product pyrimidine rings, an additional pocket far from the expected kinase/ligase catalytic site, specifically recognizes the cytosine and ribose portions of the product inhibitor.</text>
</comment>
<comment type="similarity">
    <text evidence="1">Belongs to the CTP synthase family.</text>
</comment>
<name>PYRG_HERA2</name>
<accession>A9B6S7</accession>
<evidence type="ECO:0000255" key="1">
    <source>
        <dbReference type="HAMAP-Rule" id="MF_01227"/>
    </source>
</evidence>
<organism>
    <name type="scientific">Herpetosiphon aurantiacus (strain ATCC 23779 / DSM 785 / 114-95)</name>
    <dbReference type="NCBI Taxonomy" id="316274"/>
    <lineage>
        <taxon>Bacteria</taxon>
        <taxon>Bacillati</taxon>
        <taxon>Chloroflexota</taxon>
        <taxon>Chloroflexia</taxon>
        <taxon>Herpetosiphonales</taxon>
        <taxon>Herpetosiphonaceae</taxon>
        <taxon>Herpetosiphon</taxon>
    </lineage>
</organism>
<gene>
    <name evidence="1" type="primary">pyrG</name>
    <name type="ordered locus">Haur_1743</name>
</gene>
<reference key="1">
    <citation type="journal article" date="2011" name="Stand. Genomic Sci.">
        <title>Complete genome sequence of the filamentous gliding predatory bacterium Herpetosiphon aurantiacus type strain (114-95(T)).</title>
        <authorList>
            <person name="Kiss H."/>
            <person name="Nett M."/>
            <person name="Domin N."/>
            <person name="Martin K."/>
            <person name="Maresca J.A."/>
            <person name="Copeland A."/>
            <person name="Lapidus A."/>
            <person name="Lucas S."/>
            <person name="Berry K.W."/>
            <person name="Glavina Del Rio T."/>
            <person name="Dalin E."/>
            <person name="Tice H."/>
            <person name="Pitluck S."/>
            <person name="Richardson P."/>
            <person name="Bruce D."/>
            <person name="Goodwin L."/>
            <person name="Han C."/>
            <person name="Detter J.C."/>
            <person name="Schmutz J."/>
            <person name="Brettin T."/>
            <person name="Land M."/>
            <person name="Hauser L."/>
            <person name="Kyrpides N.C."/>
            <person name="Ivanova N."/>
            <person name="Goeker M."/>
            <person name="Woyke T."/>
            <person name="Klenk H.P."/>
            <person name="Bryant D.A."/>
        </authorList>
    </citation>
    <scope>NUCLEOTIDE SEQUENCE [LARGE SCALE GENOMIC DNA]</scope>
    <source>
        <strain>ATCC 23779 / DSM 785 / 114-95</strain>
    </source>
</reference>
<proteinExistence type="inferred from homology"/>
<feature type="chain" id="PRO_1000139471" description="CTP synthase">
    <location>
        <begin position="1"/>
        <end position="534"/>
    </location>
</feature>
<feature type="domain" description="Glutamine amidotransferase type-1" evidence="1">
    <location>
        <begin position="292"/>
        <end position="534"/>
    </location>
</feature>
<feature type="region of interest" description="Amidoligase domain" evidence="1">
    <location>
        <begin position="1"/>
        <end position="267"/>
    </location>
</feature>
<feature type="active site" description="Nucleophile; for glutamine hydrolysis" evidence="1">
    <location>
        <position position="381"/>
    </location>
</feature>
<feature type="active site" evidence="1">
    <location>
        <position position="507"/>
    </location>
</feature>
<feature type="active site" evidence="1">
    <location>
        <position position="509"/>
    </location>
</feature>
<feature type="binding site" evidence="1">
    <location>
        <position position="13"/>
    </location>
    <ligand>
        <name>CTP</name>
        <dbReference type="ChEBI" id="CHEBI:37563"/>
        <note>allosteric inhibitor</note>
    </ligand>
</feature>
<feature type="binding site" evidence="1">
    <location>
        <position position="13"/>
    </location>
    <ligand>
        <name>UTP</name>
        <dbReference type="ChEBI" id="CHEBI:46398"/>
    </ligand>
</feature>
<feature type="binding site" evidence="1">
    <location>
        <begin position="14"/>
        <end position="19"/>
    </location>
    <ligand>
        <name>ATP</name>
        <dbReference type="ChEBI" id="CHEBI:30616"/>
    </ligand>
</feature>
<feature type="binding site" evidence="1">
    <location>
        <position position="54"/>
    </location>
    <ligand>
        <name>L-glutamine</name>
        <dbReference type="ChEBI" id="CHEBI:58359"/>
    </ligand>
</feature>
<feature type="binding site" evidence="1">
    <location>
        <position position="71"/>
    </location>
    <ligand>
        <name>ATP</name>
        <dbReference type="ChEBI" id="CHEBI:30616"/>
    </ligand>
</feature>
<feature type="binding site" evidence="1">
    <location>
        <position position="71"/>
    </location>
    <ligand>
        <name>Mg(2+)</name>
        <dbReference type="ChEBI" id="CHEBI:18420"/>
    </ligand>
</feature>
<feature type="binding site" evidence="1">
    <location>
        <position position="141"/>
    </location>
    <ligand>
        <name>Mg(2+)</name>
        <dbReference type="ChEBI" id="CHEBI:18420"/>
    </ligand>
</feature>
<feature type="binding site" evidence="1">
    <location>
        <begin position="148"/>
        <end position="150"/>
    </location>
    <ligand>
        <name>CTP</name>
        <dbReference type="ChEBI" id="CHEBI:37563"/>
        <note>allosteric inhibitor</note>
    </ligand>
</feature>
<feature type="binding site" evidence="1">
    <location>
        <begin position="188"/>
        <end position="193"/>
    </location>
    <ligand>
        <name>CTP</name>
        <dbReference type="ChEBI" id="CHEBI:37563"/>
        <note>allosteric inhibitor</note>
    </ligand>
</feature>
<feature type="binding site" evidence="1">
    <location>
        <begin position="188"/>
        <end position="193"/>
    </location>
    <ligand>
        <name>UTP</name>
        <dbReference type="ChEBI" id="CHEBI:46398"/>
    </ligand>
</feature>
<feature type="binding site" evidence="1">
    <location>
        <position position="224"/>
    </location>
    <ligand>
        <name>CTP</name>
        <dbReference type="ChEBI" id="CHEBI:37563"/>
        <note>allosteric inhibitor</note>
    </ligand>
</feature>
<feature type="binding site" evidence="1">
    <location>
        <position position="224"/>
    </location>
    <ligand>
        <name>UTP</name>
        <dbReference type="ChEBI" id="CHEBI:46398"/>
    </ligand>
</feature>
<feature type="binding site" evidence="1">
    <location>
        <position position="354"/>
    </location>
    <ligand>
        <name>L-glutamine</name>
        <dbReference type="ChEBI" id="CHEBI:58359"/>
    </ligand>
</feature>
<feature type="binding site" evidence="1">
    <location>
        <begin position="382"/>
        <end position="385"/>
    </location>
    <ligand>
        <name>L-glutamine</name>
        <dbReference type="ChEBI" id="CHEBI:58359"/>
    </ligand>
</feature>
<feature type="binding site" evidence="1">
    <location>
        <position position="405"/>
    </location>
    <ligand>
        <name>L-glutamine</name>
        <dbReference type="ChEBI" id="CHEBI:58359"/>
    </ligand>
</feature>
<feature type="binding site" evidence="1">
    <location>
        <position position="462"/>
    </location>
    <ligand>
        <name>L-glutamine</name>
        <dbReference type="ChEBI" id="CHEBI:58359"/>
    </ligand>
</feature>